<name>CALCA_HUMAN</name>
<dbReference type="EMBL" id="M12667">
    <property type="protein sequence ID" value="AAA51914.1"/>
    <property type="molecule type" value="Genomic_DNA"/>
</dbReference>
<dbReference type="EMBL" id="M12664">
    <property type="protein sequence ID" value="AAA51914.1"/>
    <property type="status" value="JOINED"/>
    <property type="molecule type" value="Genomic_DNA"/>
</dbReference>
<dbReference type="EMBL" id="M12665">
    <property type="protein sequence ID" value="AAA51914.1"/>
    <property type="status" value="JOINED"/>
    <property type="molecule type" value="Genomic_DNA"/>
</dbReference>
<dbReference type="EMBL" id="X15943">
    <property type="protein sequence ID" value="CAA34070.1"/>
    <property type="molecule type" value="Genomic_DNA"/>
</dbReference>
<dbReference type="EMBL" id="AC090835">
    <property type="status" value="NOT_ANNOTATED_CDS"/>
    <property type="molecule type" value="Genomic_DNA"/>
</dbReference>
<dbReference type="EMBL" id="K03512">
    <property type="protein sequence ID" value="AAA52011.1"/>
    <property type="molecule type" value="mRNA"/>
</dbReference>
<dbReference type="EMBL" id="X02330">
    <property type="protein sequence ID" value="CAA26190.1"/>
    <property type="molecule type" value="mRNA"/>
</dbReference>
<dbReference type="EMBL" id="M28637">
    <property type="protein sequence ID" value="AAA52012.1"/>
    <property type="molecule type" value="Genomic_DNA"/>
</dbReference>
<dbReference type="EMBL" id="M26094">
    <property type="protein sequence ID" value="AAA51912.1"/>
    <property type="molecule type" value="Genomic_DNA"/>
</dbReference>
<dbReference type="CCDS" id="CCDS31432.1">
    <molecule id="P06881-1"/>
</dbReference>
<dbReference type="PIR" id="S07644">
    <property type="entry name" value="TCHUR"/>
</dbReference>
<dbReference type="RefSeq" id="NP_001029125.1">
    <molecule id="P06881-1"/>
    <property type="nucleotide sequence ID" value="NM_001033953.3"/>
</dbReference>
<dbReference type="RefSeq" id="NP_001365879.1">
    <molecule id="P06881-1"/>
    <property type="nucleotide sequence ID" value="NM_001378950.1"/>
</dbReference>
<dbReference type="PDB" id="6E3Y">
    <property type="method" value="EM"/>
    <property type="resolution" value="3.30 A"/>
    <property type="chains" value="P=83-119"/>
</dbReference>
<dbReference type="PDB" id="7KNU">
    <property type="method" value="EM"/>
    <property type="resolution" value="3.49 A"/>
    <property type="chains" value="P=83-119"/>
</dbReference>
<dbReference type="PDB" id="9AUC">
    <property type="method" value="EM"/>
    <property type="resolution" value="2.40 A"/>
    <property type="chains" value="P=83-119"/>
</dbReference>
<dbReference type="PDBsum" id="6E3Y"/>
<dbReference type="PDBsum" id="7KNU"/>
<dbReference type="PDBsum" id="9AUC"/>
<dbReference type="BMRB" id="P06881"/>
<dbReference type="EMDB" id="EMD-22963"/>
<dbReference type="EMDB" id="EMD-43877"/>
<dbReference type="EMDB" id="EMD-8978"/>
<dbReference type="SMR" id="P06881"/>
<dbReference type="BioGRID" id="107247">
    <property type="interactions" value="18"/>
</dbReference>
<dbReference type="CORUM" id="P06881"/>
<dbReference type="IntAct" id="P06881">
    <property type="interactions" value="9"/>
</dbReference>
<dbReference type="BindingDB" id="P06881"/>
<dbReference type="ChEMBL" id="CHEMBL5293"/>
<dbReference type="DrugBank" id="DB14040">
    <property type="generic name" value="Eptinezumab"/>
</dbReference>
<dbReference type="DrugBank" id="DB14041">
    <property type="generic name" value="Fremanezumab"/>
</dbReference>
<dbReference type="DrugBank" id="DB14042">
    <property type="generic name" value="Galcanezumab"/>
</dbReference>
<dbReference type="DrugBank" id="DB04869">
    <property type="generic name" value="Olcegepant"/>
</dbReference>
<dbReference type="DrugBank" id="DB12228">
    <property type="generic name" value="Telcagepant"/>
</dbReference>
<dbReference type="DrugCentral" id="P06881"/>
<dbReference type="TCDB" id="1.C.49.1.2">
    <property type="family name" value="the cytotoxic amylin (amylin) family"/>
</dbReference>
<dbReference type="iPTMnet" id="P06881"/>
<dbReference type="BioMuta" id="CALCA"/>
<dbReference type="DMDM" id="308153625"/>
<dbReference type="MassIVE" id="P06881"/>
<dbReference type="ProteomicsDB" id="51940">
    <molecule id="P06881-1"/>
</dbReference>
<dbReference type="ABCD" id="P06881">
    <property type="antibodies" value="3 sequenced antibodies"/>
</dbReference>
<dbReference type="Antibodypedia" id="3493">
    <property type="antibodies" value="1815 antibodies from 50 providers"/>
</dbReference>
<dbReference type="DNASU" id="796"/>
<dbReference type="Ensembl" id="ENST00000486207.6">
    <molecule id="P06881-1"/>
    <property type="protein sequence ID" value="ENSP00000417833.1"/>
    <property type="gene ID" value="ENSG00000110680.14"/>
</dbReference>
<dbReference type="Ensembl" id="ENST00000706042.1">
    <molecule id="P06881-1"/>
    <property type="protein sequence ID" value="ENSP00000516203.1"/>
    <property type="gene ID" value="ENSG00000110680.14"/>
</dbReference>
<dbReference type="Ensembl" id="ENST00000706043.1">
    <molecule id="P06881-1"/>
    <property type="protein sequence ID" value="ENSP00000516204.1"/>
    <property type="gene ID" value="ENSG00000110680.14"/>
</dbReference>
<dbReference type="GeneID" id="796"/>
<dbReference type="UCSC" id="uc001mlt.2">
    <molecule id="P06881-1"/>
    <property type="organism name" value="human"/>
</dbReference>
<dbReference type="AGR" id="HGNC:1437"/>
<dbReference type="CTD" id="796"/>
<dbReference type="DisGeNET" id="796"/>
<dbReference type="GeneCards" id="CALCA"/>
<dbReference type="HGNC" id="HGNC:1437">
    <property type="gene designation" value="CALCA"/>
</dbReference>
<dbReference type="HPA" id="ENSG00000110680">
    <property type="expression patterns" value="Tissue enhanced (parathyroid gland, thyroid gland)"/>
</dbReference>
<dbReference type="MalaCards" id="CALCA"/>
<dbReference type="MIM" id="114130">
    <property type="type" value="gene"/>
</dbReference>
<dbReference type="neXtProt" id="NX_P06881"/>
<dbReference type="OpenTargets" id="ENSG00000110680"/>
<dbReference type="PharmGKB" id="PA26029"/>
<dbReference type="VEuPathDB" id="HostDB:ENSG00000110680"/>
<dbReference type="GeneTree" id="ENSGT00940000162876"/>
<dbReference type="HOGENOM" id="CLU_122444_1_0_1"/>
<dbReference type="OMA" id="MYVSQAA"/>
<dbReference type="OrthoDB" id="9929923at2759"/>
<dbReference type="PathwayCommons" id="P06881"/>
<dbReference type="Reactome" id="R-HSA-418555">
    <property type="pathway name" value="G alpha (s) signalling events"/>
</dbReference>
<dbReference type="Reactome" id="R-HSA-419812">
    <property type="pathway name" value="Calcitonin-like ligand receptors"/>
</dbReference>
<dbReference type="SignaLink" id="P06881"/>
<dbReference type="BioGRID-ORCS" id="796">
    <property type="hits" value="15 hits in 1146 CRISPR screens"/>
</dbReference>
<dbReference type="ChiTaRS" id="CALCA">
    <property type="organism name" value="human"/>
</dbReference>
<dbReference type="GenomeRNAi" id="796"/>
<dbReference type="Pharos" id="P06881">
    <property type="development level" value="Tclin"/>
</dbReference>
<dbReference type="Proteomes" id="UP000005640">
    <property type="component" value="Chromosome 11"/>
</dbReference>
<dbReference type="Bgee" id="ENSG00000110680">
    <property type="expression patterns" value="Expressed in dorsal root ganglion and 124 other cell types or tissues"/>
</dbReference>
<dbReference type="ExpressionAtlas" id="P06881">
    <property type="expression patterns" value="baseline and differential"/>
</dbReference>
<dbReference type="GO" id="GO:0005737">
    <property type="term" value="C:cytoplasm"/>
    <property type="evidence" value="ECO:0000314"/>
    <property type="project" value="UniProtKB"/>
</dbReference>
<dbReference type="GO" id="GO:0005576">
    <property type="term" value="C:extracellular region"/>
    <property type="evidence" value="ECO:0000304"/>
    <property type="project" value="Reactome"/>
</dbReference>
<dbReference type="GO" id="GO:0005615">
    <property type="term" value="C:extracellular space"/>
    <property type="evidence" value="ECO:0000314"/>
    <property type="project" value="UniProt"/>
</dbReference>
<dbReference type="GO" id="GO:0005179">
    <property type="term" value="F:hormone activity"/>
    <property type="evidence" value="ECO:0000314"/>
    <property type="project" value="UniProt"/>
</dbReference>
<dbReference type="GO" id="GO:0044877">
    <property type="term" value="F:protein-containing complex binding"/>
    <property type="evidence" value="ECO:0000314"/>
    <property type="project" value="UniProtKB"/>
</dbReference>
<dbReference type="GO" id="GO:0005102">
    <property type="term" value="F:signaling receptor binding"/>
    <property type="evidence" value="ECO:0000314"/>
    <property type="project" value="UniProtKB"/>
</dbReference>
<dbReference type="GO" id="GO:0007190">
    <property type="term" value="P:activation of adenylate cyclase activity"/>
    <property type="evidence" value="ECO:0000314"/>
    <property type="project" value="UniProtKB"/>
</dbReference>
<dbReference type="GO" id="GO:0007189">
    <property type="term" value="P:adenylate cyclase-activating G protein-coupled receptor signaling pathway"/>
    <property type="evidence" value="ECO:0000314"/>
    <property type="project" value="UniProtKB"/>
</dbReference>
<dbReference type="GO" id="GO:0150059">
    <property type="term" value="P:amylin receptor 1 signaling pathway"/>
    <property type="evidence" value="ECO:0000314"/>
    <property type="project" value="UniProt"/>
</dbReference>
<dbReference type="GO" id="GO:1990408">
    <property type="term" value="P:calcitonin gene-related peptide receptor signaling pathway"/>
    <property type="evidence" value="ECO:0000314"/>
    <property type="project" value="UniProt"/>
</dbReference>
<dbReference type="GO" id="GO:0007267">
    <property type="term" value="P:cell-cell signaling"/>
    <property type="evidence" value="ECO:0000304"/>
    <property type="project" value="ProtInc"/>
</dbReference>
<dbReference type="GO" id="GO:0043542">
    <property type="term" value="P:endothelial cell migration"/>
    <property type="evidence" value="ECO:0000314"/>
    <property type="project" value="UniProtKB"/>
</dbReference>
<dbReference type="GO" id="GO:0001935">
    <property type="term" value="P:endothelial cell proliferation"/>
    <property type="evidence" value="ECO:0000314"/>
    <property type="project" value="UniProtKB"/>
</dbReference>
<dbReference type="GO" id="GO:0002031">
    <property type="term" value="P:G protein-coupled receptor internalization"/>
    <property type="evidence" value="ECO:0000314"/>
    <property type="project" value="UniProtKB"/>
</dbReference>
<dbReference type="GO" id="GO:0007159">
    <property type="term" value="P:leukocyte cell-cell adhesion"/>
    <property type="evidence" value="ECO:0000314"/>
    <property type="project" value="UniProtKB"/>
</dbReference>
<dbReference type="GO" id="GO:0045776">
    <property type="term" value="P:negative regulation of blood pressure"/>
    <property type="evidence" value="ECO:0000314"/>
    <property type="project" value="MGI"/>
</dbReference>
<dbReference type="GO" id="GO:0045779">
    <property type="term" value="P:negative regulation of bone resorption"/>
    <property type="evidence" value="ECO:0000314"/>
    <property type="project" value="UniProtKB"/>
</dbReference>
<dbReference type="GO" id="GO:0010523">
    <property type="term" value="P:negative regulation of calcium ion transport into cytosol"/>
    <property type="evidence" value="ECO:0000314"/>
    <property type="project" value="UniProtKB"/>
</dbReference>
<dbReference type="GO" id="GO:0045671">
    <property type="term" value="P:negative regulation of osteoclast differentiation"/>
    <property type="evidence" value="ECO:0000314"/>
    <property type="project" value="UniProtKB"/>
</dbReference>
<dbReference type="GO" id="GO:0001976">
    <property type="term" value="P:nervous system process involved in regulation of systemic arterial blood pressure"/>
    <property type="evidence" value="ECO:0000314"/>
    <property type="project" value="MGI"/>
</dbReference>
<dbReference type="GO" id="GO:0007200">
    <property type="term" value="P:phospholipase C-activating G protein-coupled receptor signaling pathway"/>
    <property type="evidence" value="ECO:0000314"/>
    <property type="project" value="UniProtKB"/>
</dbReference>
<dbReference type="GO" id="GO:0032730">
    <property type="term" value="P:positive regulation of interleukin-1 alpha production"/>
    <property type="evidence" value="ECO:0000314"/>
    <property type="project" value="UniProtKB"/>
</dbReference>
<dbReference type="GO" id="GO:0032757">
    <property type="term" value="P:positive regulation of interleukin-8 production"/>
    <property type="evidence" value="ECO:0000314"/>
    <property type="project" value="UniProtKB"/>
</dbReference>
<dbReference type="GO" id="GO:0045651">
    <property type="term" value="P:positive regulation of macrophage differentiation"/>
    <property type="evidence" value="ECO:0000314"/>
    <property type="project" value="UniProtKB"/>
</dbReference>
<dbReference type="GO" id="GO:0006468">
    <property type="term" value="P:protein phosphorylation"/>
    <property type="evidence" value="ECO:0000314"/>
    <property type="project" value="UniProtKB"/>
</dbReference>
<dbReference type="GO" id="GO:0031623">
    <property type="term" value="P:receptor internalization"/>
    <property type="evidence" value="ECO:0000314"/>
    <property type="project" value="UniProtKB"/>
</dbReference>
<dbReference type="GO" id="GO:0008217">
    <property type="term" value="P:regulation of blood pressure"/>
    <property type="evidence" value="ECO:0000303"/>
    <property type="project" value="UniProtKB"/>
</dbReference>
<dbReference type="GO" id="GO:0051480">
    <property type="term" value="P:regulation of cytosolic calcium ion concentration"/>
    <property type="evidence" value="ECO:0000314"/>
    <property type="project" value="UniProtKB"/>
</dbReference>
<dbReference type="GO" id="GO:0001944">
    <property type="term" value="P:vasculature development"/>
    <property type="evidence" value="ECO:0000314"/>
    <property type="project" value="UniProtKB"/>
</dbReference>
<dbReference type="GO" id="GO:0042311">
    <property type="term" value="P:vasodilation"/>
    <property type="evidence" value="ECO:0000314"/>
    <property type="project" value="UniProtKB"/>
</dbReference>
<dbReference type="Gene3D" id="6.10.250.2190">
    <property type="match status" value="1"/>
</dbReference>
<dbReference type="InterPro" id="IPR021117">
    <property type="entry name" value="Calcitonin-like"/>
</dbReference>
<dbReference type="InterPro" id="IPR021116">
    <property type="entry name" value="Calcitonin/adrenomedullin"/>
</dbReference>
<dbReference type="InterPro" id="IPR018360">
    <property type="entry name" value="Calcitonin_CS"/>
</dbReference>
<dbReference type="InterPro" id="IPR015476">
    <property type="entry name" value="Calcitonin_gene-rel_peptide"/>
</dbReference>
<dbReference type="InterPro" id="IPR001693">
    <property type="entry name" value="Calcitonin_peptide-like"/>
</dbReference>
<dbReference type="PANTHER" id="PTHR10505:SF3">
    <property type="entry name" value="CALCITONIN GENE-RELATED PEPTIDE 2"/>
    <property type="match status" value="1"/>
</dbReference>
<dbReference type="PANTHER" id="PTHR10505">
    <property type="entry name" value="CALCITONIN-RELATED"/>
    <property type="match status" value="1"/>
</dbReference>
<dbReference type="Pfam" id="PF00214">
    <property type="entry name" value="Calc_CGRP_IAPP"/>
    <property type="match status" value="1"/>
</dbReference>
<dbReference type="PRINTS" id="PR00817">
    <property type="entry name" value="CALCITONINB"/>
</dbReference>
<dbReference type="SMART" id="SM00113">
    <property type="entry name" value="CALCITONIN"/>
    <property type="match status" value="1"/>
</dbReference>
<dbReference type="PROSITE" id="PS00258">
    <property type="entry name" value="CALCITONIN"/>
    <property type="match status" value="1"/>
</dbReference>
<organism>
    <name type="scientific">Homo sapiens</name>
    <name type="common">Human</name>
    <dbReference type="NCBI Taxonomy" id="9606"/>
    <lineage>
        <taxon>Eukaryota</taxon>
        <taxon>Metazoa</taxon>
        <taxon>Chordata</taxon>
        <taxon>Craniata</taxon>
        <taxon>Vertebrata</taxon>
        <taxon>Euteleostomi</taxon>
        <taxon>Mammalia</taxon>
        <taxon>Eutheria</taxon>
        <taxon>Euarchontoglires</taxon>
        <taxon>Primates</taxon>
        <taxon>Haplorrhini</taxon>
        <taxon>Catarrhini</taxon>
        <taxon>Hominidae</taxon>
        <taxon>Homo</taxon>
    </lineage>
</organism>
<keyword id="KW-0002">3D-structure</keyword>
<keyword id="KW-0025">Alternative splicing</keyword>
<keyword id="KW-0027">Amidation</keyword>
<keyword id="KW-0165">Cleavage on pair of basic residues</keyword>
<keyword id="KW-0903">Direct protein sequencing</keyword>
<keyword id="KW-1015">Disulfide bond</keyword>
<keyword id="KW-0372">Hormone</keyword>
<keyword id="KW-1267">Proteomics identification</keyword>
<keyword id="KW-1185">Reference proteome</keyword>
<keyword id="KW-0964">Secreted</keyword>
<keyword id="KW-0732">Signal</keyword>
<sequence length="128" mass="13899">MGFQKFSPFLALSILVLLQAGSLHAAPFRSALESSPADPATLSEDEARLLLAALVQDYVQMKASELEQEQEREGSRIIAQKRACDTATCVTHRLAGLLSRSGGVVKNNFVPTNVGSKAFGRRRRDLQA</sequence>
<accession>P06881</accession>
<accession>Q93048</accession>
<accession>Q9UCP0</accession>
<protein>
    <recommendedName>
        <fullName>Calcitonin gene-related peptide 1</fullName>
        <shortName evidence="11">CGRP1</shortName>
    </recommendedName>
    <alternativeName>
        <fullName>Alpha-type CGRP</fullName>
    </alternativeName>
    <alternativeName>
        <fullName>Calcitonin gene-related peptide I</fullName>
        <shortName>CGRP-I</shortName>
    </alternativeName>
</protein>
<comment type="function">
    <text evidence="2 4 5 6 10">CGRP1/CALCA is a peptide hormone that induces vasodilation mediated by the CALCRL-RAMP1 receptor complex (PubMed:1318039, PubMed:33602864, PubMed:9620797). Dilates a variety of vessels including the coronary, cerebral and systemic vasculature. Its abundance in the CNS also points toward a neurotransmitter or neuromodulator role (PubMed:3492492). It also elevates platelet cAMP (PubMed:1318039). CGRP1 can also bind and activate CALCR-RAMP1 (AMYR1) receptor complex (PubMed:38603770).</text>
</comment>
<comment type="interaction">
    <interactant intactId="EBI-962928">
        <id>P06881</id>
    </interactant>
    <interactant intactId="EBI-962878">
        <id>Q16602</id>
        <label>CALCRL</label>
    </interactant>
    <organismsDiffer>false</organismsDiffer>
    <experiments>5</experiments>
</comment>
<comment type="subcellular location">
    <subcellularLocation>
        <location evidence="3">Secreted</location>
    </subcellularLocation>
</comment>
<comment type="alternative products">
    <event type="alternative splicing"/>
    <isoform>
        <id>P06881-1</id>
        <name>3</name>
        <sequence type="displayed"/>
    </isoform>
    <isoform>
        <id>P01258-1</id>
        <name>1</name>
        <sequence type="external"/>
    </isoform>
    <isoform>
        <id>P01258-2</id>
        <name>2</name>
        <sequence type="external"/>
    </isoform>
</comment>
<comment type="tissue specificity">
    <text evidence="5">Expressed in spinal cord.</text>
</comment>
<comment type="miscellaneous">
    <text evidence="7 8">The CALCA gene (HGNC:1437) encodes a small family of peptides including calcitonin (UniProtKB:P01258), its C-terminal flanking peptide katacalcin (UniProtKB:P01258) and the calcitonin gene-related peptide 1/CGRP1 (UniProtKB:P06881).</text>
</comment>
<comment type="similarity">
    <text evidence="12">Belongs to the calcitonin family.</text>
</comment>
<feature type="signal peptide" evidence="1">
    <location>
        <begin position="1"/>
        <end position="25"/>
    </location>
</feature>
<feature type="propeptide" id="PRO_0000004053">
    <location>
        <begin position="26"/>
        <end position="80"/>
    </location>
</feature>
<feature type="peptide" id="PRO_0000004054" description="Calcitonin gene-related peptide 1">
    <location>
        <begin position="83"/>
        <end position="119"/>
    </location>
</feature>
<feature type="propeptide" id="PRO_0000004055">
    <location>
        <begin position="125"/>
        <end position="128"/>
    </location>
</feature>
<feature type="modified residue" description="Phenylalanine amide" evidence="9">
    <location>
        <position position="119"/>
    </location>
</feature>
<feature type="disulfide bond" evidence="6 9 15">
    <location>
        <begin position="84"/>
        <end position="89"/>
    </location>
</feature>
<feature type="sequence variant" id="VAR_048584" description="In dbSNP:rs5239.">
    <original>D</original>
    <variation>N</variation>
    <location>
        <position position="57"/>
    </location>
</feature>
<feature type="helix" evidence="16">
    <location>
        <begin position="87"/>
        <end position="89"/>
    </location>
</feature>
<feature type="helix" evidence="16">
    <location>
        <begin position="90"/>
        <end position="100"/>
    </location>
</feature>
<feature type="turn" evidence="16">
    <location>
        <begin position="101"/>
        <end position="103"/>
    </location>
</feature>
<feature type="strand" evidence="16">
    <location>
        <begin position="104"/>
        <end position="108"/>
    </location>
</feature>
<feature type="strand" evidence="16">
    <location>
        <begin position="115"/>
        <end position="117"/>
    </location>
</feature>
<proteinExistence type="evidence at protein level"/>
<gene>
    <name evidence="13" type="primary">CALCA</name>
    <name type="synonym">CALC1</name>
</gene>
<reference key="1">
    <citation type="journal article" date="1985" name="Proc. Natl. Acad. Sci. U.S.A.">
        <title>Alternative RNA processing events in human calcitonin/calcitonin gene-related peptide gene expression.</title>
        <authorList>
            <person name="Jonas V."/>
            <person name="Lin C.R."/>
            <person name="Kawashima E."/>
            <person name="Semon D."/>
            <person name="Swanson L.W."/>
            <person name="Mermod J.-J."/>
            <person name="Evans R.M."/>
            <person name="Rosenfeld M.G."/>
        </authorList>
    </citation>
    <scope>NUCLEOTIDE SEQUENCE [GENOMIC DNA]</scope>
</reference>
<reference key="2">
    <citation type="journal article" date="1989" name="Nucleic Acids Res.">
        <title>Structure and methylation of the human calcitonin/alpha-CGRP gene.</title>
        <authorList>
            <person name="Broad P.M."/>
            <person name="Symes A.J."/>
            <person name="Thakker R.V."/>
            <person name="Craig R.K."/>
        </authorList>
    </citation>
    <scope>NUCLEOTIDE SEQUENCE [GENOMIC DNA]</scope>
</reference>
<reference key="3">
    <citation type="journal article" date="2006" name="Nature">
        <title>Human chromosome 11 DNA sequence and analysis including novel gene identification.</title>
        <authorList>
            <person name="Taylor T.D."/>
            <person name="Noguchi H."/>
            <person name="Totoki Y."/>
            <person name="Toyoda A."/>
            <person name="Kuroki Y."/>
            <person name="Dewar K."/>
            <person name="Lloyd C."/>
            <person name="Itoh T."/>
            <person name="Takeda T."/>
            <person name="Kim D.-W."/>
            <person name="She X."/>
            <person name="Barlow K.F."/>
            <person name="Bloom T."/>
            <person name="Bruford E."/>
            <person name="Chang J.L."/>
            <person name="Cuomo C.A."/>
            <person name="Eichler E."/>
            <person name="FitzGerald M.G."/>
            <person name="Jaffe D.B."/>
            <person name="LaButti K."/>
            <person name="Nicol R."/>
            <person name="Park H.-S."/>
            <person name="Seaman C."/>
            <person name="Sougnez C."/>
            <person name="Yang X."/>
            <person name="Zimmer A.R."/>
            <person name="Zody M.C."/>
            <person name="Birren B.W."/>
            <person name="Nusbaum C."/>
            <person name="Fujiyama A."/>
            <person name="Hattori M."/>
            <person name="Rogers J."/>
            <person name="Lander E.S."/>
            <person name="Sakaki Y."/>
        </authorList>
    </citation>
    <scope>NUCLEOTIDE SEQUENCE [LARGE SCALE GENOMIC DNA]</scope>
</reference>
<reference key="4">
    <citation type="journal article" date="1984" name="Biochem. Biophys. Res. Commun.">
        <title>Structure and expression of a gene encoding human calcitonin and calcitonin gene related peptide.</title>
        <authorList>
            <person name="Nelkin B.D."/>
            <person name="Rosenfeld K.I."/>
            <person name="de Bustros A."/>
            <person name="Leong S.S."/>
            <person name="Roos B.A."/>
            <person name="Baylin S.B."/>
        </authorList>
    </citation>
    <scope>NUCLEOTIDE SEQUENCE [MRNA] OF 48-119</scope>
</reference>
<reference key="5">
    <citation type="journal article" date="1985" name="EMBO J.">
        <title>Expression of the human calcitonin/CGRP gene in lung and thyroid carcinoma.</title>
        <authorList>
            <person name="Edbrooke M.R."/>
            <person name="Parker D."/>
            <person name="McVey J.H."/>
            <person name="Riley J.H."/>
            <person name="Sorenson G.D."/>
            <person name="Pettengill O.S."/>
            <person name="Craig R.K."/>
        </authorList>
    </citation>
    <scope>NUCLEOTIDE SEQUENCE [MRNA] OF 76-128</scope>
    <scope>SUBCELLULAR LOCATION</scope>
</reference>
<reference key="6">
    <citation type="journal article" date="1984" name="J. Clin. Endocrinol. Metab.">
        <title>Calcitonin gene related peptide coding sequence is conserved in the human genome and is expressed in medullary thyroid carcinoma.</title>
        <authorList>
            <person name="Steenbergh P.H."/>
            <person name="Hoppener J.W."/>
            <person name="Zandberg J."/>
            <person name="de Ven W.J."/>
            <person name="Jansz H.S."/>
            <person name="Lips C.J."/>
        </authorList>
    </citation>
    <scope>NUCLEOTIDE SEQUENCE [GENOMIC DNA] OF 77-128</scope>
    <source>
        <tissue>Thyroid carcinoma</tissue>
    </source>
</reference>
<reference key="7">
    <citation type="journal article" date="1986" name="Biochem. Soc. Symp.">
        <title>Expression and function of the human calcitonin/alpha-CGRP gene in health and disease.</title>
        <authorList>
            <person name="Craig R.K."/>
            <person name="Riley J.H."/>
            <person name="Edbrooke M.R."/>
            <person name="Broad P.M."/>
            <person name="Foord S.M."/>
            <person name="Al-Kazwini S.J."/>
            <person name="Holman J.J."/>
            <person name="Marshall I."/>
        </authorList>
    </citation>
    <scope>NUCLEOTIDE SEQUENCE [GENOMIC DNA] OF 77-128</scope>
</reference>
<reference key="8">
    <citation type="journal article" date="1984" name="Nature">
        <title>Isolation and characterization of human calcitonin gene-related peptide.</title>
        <authorList>
            <person name="Morris H.R."/>
            <person name="Panico M."/>
            <person name="Etienne T."/>
            <person name="Tippins J."/>
            <person name="Girgis S.I."/>
            <person name="McIntyre I."/>
        </authorList>
    </citation>
    <scope>PROTEIN SEQUENCE OF 83-119</scope>
    <scope>AMIDATION AT PHE-119</scope>
    <scope>DISULFIDE BOND</scope>
</reference>
<reference key="9">
    <citation type="journal article" date="1987" name="J. Biol. Chem.">
        <title>Identification in the human central nervous system, pituitary, and thyroid of a novel calcitonin gene-related peptide, and partial amino acid sequence in the spinal cord.</title>
        <authorList>
            <person name="Petermann J.B."/>
            <person name="Born W."/>
            <person name="Chang J.Y."/>
            <person name="Fischer J.A."/>
        </authorList>
    </citation>
    <scope>PROTEIN SEQUENCE OF 83-117</scope>
</reference>
<reference key="10">
    <citation type="journal article" date="1992" name="Biochem. Biophys. Res. Commun.">
        <title>Isolation and characterization of peptides which act on rat platelets, from a pheochromocytoma.</title>
        <authorList>
            <person name="Kitamura K."/>
            <person name="Kangawa K."/>
            <person name="Kawamoto M."/>
            <person name="Ichiki Y."/>
            <person name="Matsuo H."/>
            <person name="Eto T."/>
        </authorList>
    </citation>
    <scope>PROTEIN SEQUENCE OF 83-108</scope>
    <scope>FUNCTION</scope>
    <source>
        <tissue>Pheochromocytoma</tissue>
    </source>
</reference>
<reference key="11">
    <citation type="journal article" date="1998" name="Nature">
        <title>RAMPs regulate the transport and ligand specificity of the calcitonin-receptor-like receptor.</title>
        <authorList>
            <person name="McLatchie L.M."/>
            <person name="Fraser N.J."/>
            <person name="Main M.J."/>
            <person name="Wise A."/>
            <person name="Brown J."/>
            <person name="Thompson N."/>
            <person name="Solari R."/>
            <person name="Lee M.G."/>
            <person name="Foord S.M."/>
        </authorList>
    </citation>
    <scope>FUNCTION</scope>
    <source>
        <tissue>Neuroblastoma</tissue>
    </source>
</reference>
<reference key="12">
    <citation type="journal article" date="1991" name="Biochemistry">
        <title>Solution structure of human calcitonin gene-related peptide by 1H NMR and distance geometry with restrained molecular dynamics.</title>
        <authorList>
            <person name="Breeze A.L."/>
            <person name="Harvey T.S."/>
            <person name="Bazzo R."/>
            <person name="Campbell I.D."/>
        </authorList>
    </citation>
    <scope>STRUCTURE BY NMR OF CGRP</scope>
</reference>
<reference key="13">
    <citation type="journal article" date="1991" name="Biochem. J.">
        <title>Solution structures of calcitonin-gene-related-peptide analogues of calcitonin-gene-related peptide and amylin.</title>
        <authorList>
            <person name="Hubbard J.A.M."/>
            <person name="Martin S.R."/>
            <person name="Chaplin L.C."/>
            <person name="Bose C."/>
            <person name="Kelly S.M."/>
            <person name="Price N.C."/>
        </authorList>
    </citation>
    <scope>STRUCTURE BY NMR OF CGRP</scope>
</reference>
<reference evidence="14" key="14">
    <citation type="journal article" date="2021" name="Science">
        <title>Structure and dynamics of the CGRP receptor in apo and peptide-bound forms.</title>
        <authorList>
            <person name="Josephs T.M."/>
            <person name="Belousoff M.J."/>
            <person name="Liang Y.L."/>
            <person name="Piper S.J."/>
            <person name="Cao J."/>
            <person name="Garama D.J."/>
            <person name="Leach K."/>
            <person name="Gregory K.J."/>
            <person name="Christopoulos A."/>
            <person name="Hay D.L."/>
            <person name="Danev R."/>
            <person name="Wootten D."/>
            <person name="Sexton P.M."/>
        </authorList>
    </citation>
    <scope>STRUCTURE BY ELECTRON MICROSCOPY (3.49 ANGSTROMS) OF 83-119 IN COMPLEX WITH CALCRL; RAMP1 AND G PROTEINS</scope>
    <scope>FUNCTION</scope>
</reference>
<reference evidence="15" key="15">
    <citation type="journal article" date="2024" name="Biochemistry">
        <title>Cryo-EM Structure of the Human Amylin 1 Receptor in Complex with CGRP and Gs Protein.</title>
        <authorList>
            <person name="Cao J."/>
            <person name="Belousoff M.J."/>
            <person name="Danev R."/>
            <person name="Christopoulos A."/>
            <person name="Wootten D."/>
            <person name="Sexton P.M."/>
        </authorList>
    </citation>
    <scope>STRUCTURE BY ELECTRON MICROSCOPY (2.40 ANGSTROMS) OF 83-119 IN COMPLEX WITH CALCR; RAMP1 AND G PROTEINS</scope>
    <scope>DISULFIDE BONDS</scope>
    <scope>FUNCTION</scope>
</reference>
<evidence type="ECO:0000255" key="1"/>
<evidence type="ECO:0000269" key="2">
    <source>
    </source>
</evidence>
<evidence type="ECO:0000269" key="3">
    <source>
    </source>
</evidence>
<evidence type="ECO:0000269" key="4">
    <source>
    </source>
</evidence>
<evidence type="ECO:0000269" key="5">
    <source>
    </source>
</evidence>
<evidence type="ECO:0000269" key="6">
    <source>
    </source>
</evidence>
<evidence type="ECO:0000269" key="7">
    <source>
    </source>
</evidence>
<evidence type="ECO:0000269" key="8">
    <source>
    </source>
</evidence>
<evidence type="ECO:0000269" key="9">
    <source>
    </source>
</evidence>
<evidence type="ECO:0000269" key="10">
    <source>
    </source>
</evidence>
<evidence type="ECO:0000303" key="11">
    <source>
    </source>
</evidence>
<evidence type="ECO:0000305" key="12"/>
<evidence type="ECO:0000312" key="13">
    <source>
        <dbReference type="HGNC" id="HGNC:1437"/>
    </source>
</evidence>
<evidence type="ECO:0007744" key="14">
    <source>
        <dbReference type="PDB" id="7KNU"/>
    </source>
</evidence>
<evidence type="ECO:0007744" key="15">
    <source>
        <dbReference type="PDB" id="9AUC"/>
    </source>
</evidence>
<evidence type="ECO:0007829" key="16">
    <source>
        <dbReference type="PDB" id="9AUC"/>
    </source>
</evidence>